<accession>Q1JP09</accession>
<gene>
    <name evidence="1" type="primary">rpmC</name>
    <name type="ordered locus">MGAS9429_Spy0052</name>
</gene>
<sequence>MKLQEIKDFVKELRGLSQEELAKKENELKKELFDLRFQAAAGQLEKTARLDEVKKQIARVKTVQSEMK</sequence>
<keyword id="KW-0687">Ribonucleoprotein</keyword>
<keyword id="KW-0689">Ribosomal protein</keyword>
<proteinExistence type="inferred from homology"/>
<feature type="chain" id="PRO_1000007625" description="Large ribosomal subunit protein uL29">
    <location>
        <begin position="1"/>
        <end position="68"/>
    </location>
</feature>
<reference key="1">
    <citation type="journal article" date="2006" name="Proc. Natl. Acad. Sci. U.S.A.">
        <title>Molecular genetic anatomy of inter- and intraserotype variation in the human bacterial pathogen group A Streptococcus.</title>
        <authorList>
            <person name="Beres S.B."/>
            <person name="Richter E.W."/>
            <person name="Nagiec M.J."/>
            <person name="Sumby P."/>
            <person name="Porcella S.F."/>
            <person name="DeLeo F.R."/>
            <person name="Musser J.M."/>
        </authorList>
    </citation>
    <scope>NUCLEOTIDE SEQUENCE [LARGE SCALE GENOMIC DNA]</scope>
    <source>
        <strain>MGAS9429</strain>
    </source>
</reference>
<protein>
    <recommendedName>
        <fullName evidence="1">Large ribosomal subunit protein uL29</fullName>
    </recommendedName>
    <alternativeName>
        <fullName evidence="2">50S ribosomal protein L29</fullName>
    </alternativeName>
</protein>
<dbReference type="EMBL" id="CP000259">
    <property type="protein sequence ID" value="ABF31240.1"/>
    <property type="molecule type" value="Genomic_DNA"/>
</dbReference>
<dbReference type="RefSeq" id="WP_000775731.1">
    <property type="nucleotide sequence ID" value="NC_008021.1"/>
</dbReference>
<dbReference type="SMR" id="Q1JP09"/>
<dbReference type="GeneID" id="69900034"/>
<dbReference type="KEGG" id="spk:MGAS9429_Spy0052"/>
<dbReference type="HOGENOM" id="CLU_158491_5_2_9"/>
<dbReference type="Proteomes" id="UP000002433">
    <property type="component" value="Chromosome"/>
</dbReference>
<dbReference type="GO" id="GO:0022625">
    <property type="term" value="C:cytosolic large ribosomal subunit"/>
    <property type="evidence" value="ECO:0007669"/>
    <property type="project" value="TreeGrafter"/>
</dbReference>
<dbReference type="GO" id="GO:0003735">
    <property type="term" value="F:structural constituent of ribosome"/>
    <property type="evidence" value="ECO:0007669"/>
    <property type="project" value="InterPro"/>
</dbReference>
<dbReference type="GO" id="GO:0006412">
    <property type="term" value="P:translation"/>
    <property type="evidence" value="ECO:0007669"/>
    <property type="project" value="UniProtKB-UniRule"/>
</dbReference>
<dbReference type="CDD" id="cd00427">
    <property type="entry name" value="Ribosomal_L29_HIP"/>
    <property type="match status" value="1"/>
</dbReference>
<dbReference type="FunFam" id="1.10.287.310:FF:000001">
    <property type="entry name" value="50S ribosomal protein L29"/>
    <property type="match status" value="1"/>
</dbReference>
<dbReference type="Gene3D" id="1.10.287.310">
    <property type="match status" value="1"/>
</dbReference>
<dbReference type="HAMAP" id="MF_00374">
    <property type="entry name" value="Ribosomal_uL29"/>
    <property type="match status" value="1"/>
</dbReference>
<dbReference type="InterPro" id="IPR050063">
    <property type="entry name" value="Ribosomal_protein_uL29"/>
</dbReference>
<dbReference type="InterPro" id="IPR001854">
    <property type="entry name" value="Ribosomal_uL29"/>
</dbReference>
<dbReference type="InterPro" id="IPR018254">
    <property type="entry name" value="Ribosomal_uL29_CS"/>
</dbReference>
<dbReference type="InterPro" id="IPR036049">
    <property type="entry name" value="Ribosomal_uL29_sf"/>
</dbReference>
<dbReference type="NCBIfam" id="TIGR00012">
    <property type="entry name" value="L29"/>
    <property type="match status" value="1"/>
</dbReference>
<dbReference type="PANTHER" id="PTHR10916">
    <property type="entry name" value="60S RIBOSOMAL PROTEIN L35/50S RIBOSOMAL PROTEIN L29"/>
    <property type="match status" value="1"/>
</dbReference>
<dbReference type="PANTHER" id="PTHR10916:SF0">
    <property type="entry name" value="LARGE RIBOSOMAL SUBUNIT PROTEIN UL29C"/>
    <property type="match status" value="1"/>
</dbReference>
<dbReference type="Pfam" id="PF00831">
    <property type="entry name" value="Ribosomal_L29"/>
    <property type="match status" value="1"/>
</dbReference>
<dbReference type="SUPFAM" id="SSF46561">
    <property type="entry name" value="Ribosomal protein L29 (L29p)"/>
    <property type="match status" value="1"/>
</dbReference>
<dbReference type="PROSITE" id="PS00579">
    <property type="entry name" value="RIBOSOMAL_L29"/>
    <property type="match status" value="1"/>
</dbReference>
<evidence type="ECO:0000255" key="1">
    <source>
        <dbReference type="HAMAP-Rule" id="MF_00374"/>
    </source>
</evidence>
<evidence type="ECO:0000305" key="2"/>
<organism>
    <name type="scientific">Streptococcus pyogenes serotype M12 (strain MGAS9429)</name>
    <dbReference type="NCBI Taxonomy" id="370551"/>
    <lineage>
        <taxon>Bacteria</taxon>
        <taxon>Bacillati</taxon>
        <taxon>Bacillota</taxon>
        <taxon>Bacilli</taxon>
        <taxon>Lactobacillales</taxon>
        <taxon>Streptococcaceae</taxon>
        <taxon>Streptococcus</taxon>
    </lineage>
</organism>
<name>RL29_STRPC</name>
<comment type="similarity">
    <text evidence="1">Belongs to the universal ribosomal protein uL29 family.</text>
</comment>